<dbReference type="EC" id="3.-.-.-"/>
<dbReference type="EMBL" id="L77117">
    <property type="protein sequence ID" value="AAB98892.1"/>
    <property type="molecule type" value="Genomic_DNA"/>
</dbReference>
<dbReference type="PIR" id="H64410">
    <property type="entry name" value="H64410"/>
</dbReference>
<dbReference type="RefSeq" id="WP_010870402.1">
    <property type="nucleotide sequence ID" value="NC_000909.1"/>
</dbReference>
<dbReference type="SMR" id="Q58298"/>
<dbReference type="FunCoup" id="Q58298">
    <property type="interactions" value="22"/>
</dbReference>
<dbReference type="STRING" id="243232.MJ_0888"/>
<dbReference type="PaxDb" id="243232-MJ_0888"/>
<dbReference type="EnsemblBacteria" id="AAB98892">
    <property type="protein sequence ID" value="AAB98892"/>
    <property type="gene ID" value="MJ_0888"/>
</dbReference>
<dbReference type="GeneID" id="1451777"/>
<dbReference type="KEGG" id="mja:MJ_0888"/>
<dbReference type="eggNOG" id="arCOG00504">
    <property type="taxonomic scope" value="Archaea"/>
</dbReference>
<dbReference type="HOGENOM" id="CLU_030571_5_4_2"/>
<dbReference type="InParanoid" id="Q58298"/>
<dbReference type="OrthoDB" id="197151at2157"/>
<dbReference type="PhylomeDB" id="Q58298"/>
<dbReference type="Proteomes" id="UP000000805">
    <property type="component" value="Chromosome"/>
</dbReference>
<dbReference type="GO" id="GO:0016787">
    <property type="term" value="F:hydrolase activity"/>
    <property type="evidence" value="ECO:0007669"/>
    <property type="project" value="UniProtKB-KW"/>
</dbReference>
<dbReference type="GO" id="GO:0046872">
    <property type="term" value="F:metal ion binding"/>
    <property type="evidence" value="ECO:0007669"/>
    <property type="project" value="UniProtKB-KW"/>
</dbReference>
<dbReference type="CDD" id="cd06262">
    <property type="entry name" value="metallo-hydrolase-like_MBL-fold"/>
    <property type="match status" value="1"/>
</dbReference>
<dbReference type="Gene3D" id="3.60.15.10">
    <property type="entry name" value="Ribonuclease Z/Hydroxyacylglutathione hydrolase-like"/>
    <property type="match status" value="1"/>
</dbReference>
<dbReference type="InterPro" id="IPR051453">
    <property type="entry name" value="MBL_Glyoxalase_II"/>
</dbReference>
<dbReference type="InterPro" id="IPR001279">
    <property type="entry name" value="Metallo-B-lactamas"/>
</dbReference>
<dbReference type="InterPro" id="IPR036866">
    <property type="entry name" value="RibonucZ/Hydroxyglut_hydro"/>
</dbReference>
<dbReference type="PANTHER" id="PTHR46233">
    <property type="entry name" value="HYDROXYACYLGLUTATHIONE HYDROLASE GLOC"/>
    <property type="match status" value="1"/>
</dbReference>
<dbReference type="PANTHER" id="PTHR46233:SF3">
    <property type="entry name" value="HYDROXYACYLGLUTATHIONE HYDROLASE GLOC"/>
    <property type="match status" value="1"/>
</dbReference>
<dbReference type="Pfam" id="PF00753">
    <property type="entry name" value="Lactamase_B"/>
    <property type="match status" value="1"/>
</dbReference>
<dbReference type="SMART" id="SM00849">
    <property type="entry name" value="Lactamase_B"/>
    <property type="match status" value="1"/>
</dbReference>
<dbReference type="SUPFAM" id="SSF56281">
    <property type="entry name" value="Metallo-hydrolase/oxidoreductase"/>
    <property type="match status" value="1"/>
</dbReference>
<proteinExistence type="inferred from homology"/>
<organism>
    <name type="scientific">Methanocaldococcus jannaschii (strain ATCC 43067 / DSM 2661 / JAL-1 / JCM 10045 / NBRC 100440)</name>
    <name type="common">Methanococcus jannaschii</name>
    <dbReference type="NCBI Taxonomy" id="243232"/>
    <lineage>
        <taxon>Archaea</taxon>
        <taxon>Methanobacteriati</taxon>
        <taxon>Methanobacteriota</taxon>
        <taxon>Methanomada group</taxon>
        <taxon>Methanococci</taxon>
        <taxon>Methanococcales</taxon>
        <taxon>Methanocaldococcaceae</taxon>
        <taxon>Methanocaldococcus</taxon>
    </lineage>
</organism>
<accession>Q58298</accession>
<gene>
    <name type="ordered locus">MJ0888</name>
</gene>
<comment type="cofactor">
    <cofactor evidence="1">
        <name>Zn(2+)</name>
        <dbReference type="ChEBI" id="CHEBI:29105"/>
    </cofactor>
    <text evidence="1">Binds 2 Zn(2+) ions per subunit.</text>
</comment>
<comment type="similarity">
    <text evidence="2">Belongs to the metallo-beta-lactamase superfamily.</text>
</comment>
<sequence>MILKLNGYGYSSNSYLIIGKKNILIDPGTSGTFNILMEELERNGIKDIDLIINTHCHFDHTSADYLIEEYFNCPTIIEDKEVKHLKNGDEVTVSSLFGAKLNPPKEIIPLSEIEEELKSYGLEIIRTPGHTYGSISIIYENSLITGDTIFAYGVGRWDLPTGDVIQLRNSINLLERIANERNIDKLYPGHGEIGDRMAFSYAKLFI</sequence>
<name>Y888_METJA</name>
<feature type="chain" id="PRO_0000107092" description="Probable metallo-hydrolase MJ0888">
    <location>
        <begin position="1"/>
        <end position="206"/>
    </location>
</feature>
<feature type="binding site" evidence="1">
    <location>
        <position position="55"/>
    </location>
    <ligand>
        <name>Zn(2+)</name>
        <dbReference type="ChEBI" id="CHEBI:29105"/>
        <label>1</label>
    </ligand>
</feature>
<feature type="binding site" evidence="1">
    <location>
        <position position="57"/>
    </location>
    <ligand>
        <name>Zn(2+)</name>
        <dbReference type="ChEBI" id="CHEBI:29105"/>
        <label>1</label>
    </ligand>
</feature>
<feature type="binding site" evidence="1">
    <location>
        <position position="59"/>
    </location>
    <ligand>
        <name>Zn(2+)</name>
        <dbReference type="ChEBI" id="CHEBI:29105"/>
        <label>2</label>
    </ligand>
</feature>
<feature type="binding site" evidence="1">
    <location>
        <position position="60"/>
    </location>
    <ligand>
        <name>Zn(2+)</name>
        <dbReference type="ChEBI" id="CHEBI:29105"/>
        <label>2</label>
    </ligand>
</feature>
<feature type="binding site" evidence="1">
    <location>
        <position position="130"/>
    </location>
    <ligand>
        <name>Zn(2+)</name>
        <dbReference type="ChEBI" id="CHEBI:29105"/>
        <label>1</label>
    </ligand>
</feature>
<feature type="binding site" evidence="1">
    <location>
        <position position="147"/>
    </location>
    <ligand>
        <name>Zn(2+)</name>
        <dbReference type="ChEBI" id="CHEBI:29105"/>
        <label>1</label>
    </ligand>
</feature>
<feature type="binding site" evidence="1">
    <location>
        <position position="147"/>
    </location>
    <ligand>
        <name>Zn(2+)</name>
        <dbReference type="ChEBI" id="CHEBI:29105"/>
        <label>2</label>
    </ligand>
</feature>
<feature type="binding site" evidence="1">
    <location>
        <position position="190"/>
    </location>
    <ligand>
        <name>Zn(2+)</name>
        <dbReference type="ChEBI" id="CHEBI:29105"/>
        <label>2</label>
    </ligand>
</feature>
<reference key="1">
    <citation type="journal article" date="1996" name="Science">
        <title>Complete genome sequence of the methanogenic archaeon, Methanococcus jannaschii.</title>
        <authorList>
            <person name="Bult C.J."/>
            <person name="White O."/>
            <person name="Olsen G.J."/>
            <person name="Zhou L."/>
            <person name="Fleischmann R.D."/>
            <person name="Sutton G.G."/>
            <person name="Blake J.A."/>
            <person name="FitzGerald L.M."/>
            <person name="Clayton R.A."/>
            <person name="Gocayne J.D."/>
            <person name="Kerlavage A.R."/>
            <person name="Dougherty B.A."/>
            <person name="Tomb J.-F."/>
            <person name="Adams M.D."/>
            <person name="Reich C.I."/>
            <person name="Overbeek R."/>
            <person name="Kirkness E.F."/>
            <person name="Weinstock K.G."/>
            <person name="Merrick J.M."/>
            <person name="Glodek A."/>
            <person name="Scott J.L."/>
            <person name="Geoghagen N.S.M."/>
            <person name="Weidman J.F."/>
            <person name="Fuhrmann J.L."/>
            <person name="Nguyen D."/>
            <person name="Utterback T.R."/>
            <person name="Kelley J.M."/>
            <person name="Peterson J.D."/>
            <person name="Sadow P.W."/>
            <person name="Hanna M.C."/>
            <person name="Cotton M.D."/>
            <person name="Roberts K.M."/>
            <person name="Hurst M.A."/>
            <person name="Kaine B.P."/>
            <person name="Borodovsky M."/>
            <person name="Klenk H.-P."/>
            <person name="Fraser C.M."/>
            <person name="Smith H.O."/>
            <person name="Woese C.R."/>
            <person name="Venter J.C."/>
        </authorList>
    </citation>
    <scope>NUCLEOTIDE SEQUENCE [LARGE SCALE GENOMIC DNA]</scope>
    <source>
        <strain>ATCC 43067 / DSM 2661 / JAL-1 / JCM 10045 / NBRC 100440</strain>
    </source>
</reference>
<protein>
    <recommendedName>
        <fullName>Probable metallo-hydrolase MJ0888</fullName>
        <ecNumber>3.-.-.-</ecNumber>
    </recommendedName>
</protein>
<keyword id="KW-0378">Hydrolase</keyword>
<keyword id="KW-0479">Metal-binding</keyword>
<keyword id="KW-1185">Reference proteome</keyword>
<keyword id="KW-0862">Zinc</keyword>
<evidence type="ECO:0000250" key="1"/>
<evidence type="ECO:0000305" key="2"/>